<evidence type="ECO:0000250" key="1">
    <source>
        <dbReference type="UniProtKB" id="Q15527"/>
    </source>
</evidence>
<evidence type="ECO:0000256" key="2">
    <source>
        <dbReference type="SAM" id="MobiDB-lite"/>
    </source>
</evidence>
<evidence type="ECO:0000305" key="3"/>
<evidence type="ECO:0007744" key="4">
    <source>
    </source>
</evidence>
<reference key="1">
    <citation type="journal article" date="1986" name="Mol. Cell. Biol.">
        <title>The MES-1 murine enhancer element is closely associated with the heterogeneous 5' ends of two divergent transcription units.</title>
        <authorList>
            <person name="Williams T.J."/>
            <person name="Fried M."/>
        </authorList>
    </citation>
    <scope>NUCLEOTIDE SEQUENCE [GENOMIC DNA]</scope>
</reference>
<reference key="2">
    <citation type="journal article" date="2010" name="Cell">
        <title>A tissue-specific atlas of mouse protein phosphorylation and expression.</title>
        <authorList>
            <person name="Huttlin E.L."/>
            <person name="Jedrychowski M.P."/>
            <person name="Elias J.E."/>
            <person name="Goswami T."/>
            <person name="Rad R."/>
            <person name="Beausoleil S.A."/>
            <person name="Villen J."/>
            <person name="Haas W."/>
            <person name="Sowa M.E."/>
            <person name="Gygi S.P."/>
        </authorList>
    </citation>
    <scope>PHOSPHORYLATION [LARGE SCALE ANALYSIS] AT SER-93</scope>
    <scope>IDENTIFICATION BY MASS SPECTROMETRY [LARGE SCALE ANALYSIS]</scope>
    <source>
        <tissue>Spleen</tissue>
    </source>
</reference>
<gene>
    <name type="primary">Surf2</name>
    <name type="synonym">Surf-2</name>
</gene>
<proteinExistence type="evidence at protein level"/>
<name>SURF2_MOUSE</name>
<keyword id="KW-0597">Phosphoprotein</keyword>
<keyword id="KW-1185">Reference proteome</keyword>
<sequence length="257" mass="30355">MDEPPSDVLAFLRQHPSLRLLPNTRKVRCSLTGHELPCRLPELQEYTRGKKYQRLSSSFSNFDYAAFEPHIVPSTKNRHQLFCKLTLRHINKSPEHVLRHTQGRRYQRALHQYEECQKQGVEYVPACLLHKRKKREDQTNSDELPGQRTGFWEPASSDEEDALSDDSMTDLYPPELFTKRELGKPKNDDTPEDFLTDQQDEKPEHSEEKSFREREEARVGHKRGRKLRKKQLTSLTKKFKSYHHKPKNFSSFKQLGR</sequence>
<feature type="chain" id="PRO_0000072320" description="Surfeit locus protein 2">
    <location>
        <begin position="1"/>
        <end position="257"/>
    </location>
</feature>
<feature type="region of interest" description="Disordered" evidence="2">
    <location>
        <begin position="134"/>
        <end position="257"/>
    </location>
</feature>
<feature type="compositionally biased region" description="Acidic residues" evidence="2">
    <location>
        <begin position="156"/>
        <end position="168"/>
    </location>
</feature>
<feature type="compositionally biased region" description="Basic and acidic residues" evidence="2">
    <location>
        <begin position="177"/>
        <end position="189"/>
    </location>
</feature>
<feature type="compositionally biased region" description="Basic and acidic residues" evidence="2">
    <location>
        <begin position="199"/>
        <end position="219"/>
    </location>
</feature>
<feature type="compositionally biased region" description="Basic residues" evidence="2">
    <location>
        <begin position="220"/>
        <end position="247"/>
    </location>
</feature>
<feature type="compositionally biased region" description="Polar residues" evidence="2">
    <location>
        <begin position="248"/>
        <end position="257"/>
    </location>
</feature>
<feature type="modified residue" description="Phosphoserine" evidence="4">
    <location>
        <position position="93"/>
    </location>
</feature>
<feature type="modified residue" description="Phosphothreonine" evidence="1">
    <location>
        <position position="196"/>
    </location>
</feature>
<comment type="similarity">
    <text evidence="3">Belongs to the SURF2 family.</text>
</comment>
<accession>P09926</accession>
<protein>
    <recommendedName>
        <fullName>Surfeit locus protein 2</fullName>
        <shortName>Surf-2</shortName>
    </recommendedName>
</protein>
<organism>
    <name type="scientific">Mus musculus</name>
    <name type="common">Mouse</name>
    <dbReference type="NCBI Taxonomy" id="10090"/>
    <lineage>
        <taxon>Eukaryota</taxon>
        <taxon>Metazoa</taxon>
        <taxon>Chordata</taxon>
        <taxon>Craniata</taxon>
        <taxon>Vertebrata</taxon>
        <taxon>Euteleostomi</taxon>
        <taxon>Mammalia</taxon>
        <taxon>Eutheria</taxon>
        <taxon>Euarchontoglires</taxon>
        <taxon>Glires</taxon>
        <taxon>Rodentia</taxon>
        <taxon>Myomorpha</taxon>
        <taxon>Muroidea</taxon>
        <taxon>Muridae</taxon>
        <taxon>Murinae</taxon>
        <taxon>Mus</taxon>
        <taxon>Mus</taxon>
    </lineage>
</organism>
<dbReference type="EMBL" id="M14689">
    <property type="protein sequence ID" value="AAA40154.1"/>
    <property type="molecule type" value="Genomic_DNA"/>
</dbReference>
<dbReference type="CCDS" id="CCDS15816.1"/>
<dbReference type="PIR" id="A25394">
    <property type="entry name" value="A25394"/>
</dbReference>
<dbReference type="RefSeq" id="NP_038706.1">
    <property type="nucleotide sequence ID" value="NM_013678.4"/>
</dbReference>
<dbReference type="FunCoup" id="P09926">
    <property type="interactions" value="629"/>
</dbReference>
<dbReference type="STRING" id="10090.ENSMUSP00000015017"/>
<dbReference type="iPTMnet" id="P09926"/>
<dbReference type="PhosphoSitePlus" id="P09926"/>
<dbReference type="PaxDb" id="10090-ENSMUSP00000015017"/>
<dbReference type="PeptideAtlas" id="P09926"/>
<dbReference type="ProteomicsDB" id="254498"/>
<dbReference type="Pumba" id="P09926"/>
<dbReference type="Antibodypedia" id="31850">
    <property type="antibodies" value="48 antibodies from 16 providers"/>
</dbReference>
<dbReference type="DNASU" id="20931"/>
<dbReference type="Ensembl" id="ENSMUST00000015017.8">
    <property type="protein sequence ID" value="ENSMUSP00000015017.8"/>
    <property type="gene ID" value="ENSMUSG00000014873.16"/>
</dbReference>
<dbReference type="GeneID" id="20931"/>
<dbReference type="KEGG" id="mmu:20931"/>
<dbReference type="UCSC" id="uc008iwj.1">
    <property type="organism name" value="mouse"/>
</dbReference>
<dbReference type="AGR" id="MGI:98444"/>
<dbReference type="CTD" id="6835"/>
<dbReference type="MGI" id="MGI:98444">
    <property type="gene designation" value="Surf2"/>
</dbReference>
<dbReference type="VEuPathDB" id="HostDB:ENSMUSG00000014873"/>
<dbReference type="eggNOG" id="ENOG502QW1X">
    <property type="taxonomic scope" value="Eukaryota"/>
</dbReference>
<dbReference type="GeneTree" id="ENSGT00390000016800"/>
<dbReference type="HOGENOM" id="CLU_094630_1_0_1"/>
<dbReference type="InParanoid" id="P09926"/>
<dbReference type="OMA" id="QYEPYIV"/>
<dbReference type="OrthoDB" id="127285at2759"/>
<dbReference type="PhylomeDB" id="P09926"/>
<dbReference type="TreeFam" id="TF329107"/>
<dbReference type="BioGRID-ORCS" id="20931">
    <property type="hits" value="0 hits in 63 CRISPR screens"/>
</dbReference>
<dbReference type="ChiTaRS" id="Surf2">
    <property type="organism name" value="mouse"/>
</dbReference>
<dbReference type="PRO" id="PR:P09926"/>
<dbReference type="Proteomes" id="UP000000589">
    <property type="component" value="Chromosome 2"/>
</dbReference>
<dbReference type="RNAct" id="P09926">
    <property type="molecule type" value="protein"/>
</dbReference>
<dbReference type="Bgee" id="ENSMUSG00000014873">
    <property type="expression patterns" value="Expressed in ileal epithelium and 267 other cell types or tissues"/>
</dbReference>
<dbReference type="ExpressionAtlas" id="P09926">
    <property type="expression patterns" value="baseline and differential"/>
</dbReference>
<dbReference type="GO" id="GO:0016607">
    <property type="term" value="C:nuclear speck"/>
    <property type="evidence" value="ECO:0007669"/>
    <property type="project" value="Ensembl"/>
</dbReference>
<dbReference type="GO" id="GO:0005730">
    <property type="term" value="C:nucleolus"/>
    <property type="evidence" value="ECO:0007669"/>
    <property type="project" value="Ensembl"/>
</dbReference>
<dbReference type="GO" id="GO:0005886">
    <property type="term" value="C:plasma membrane"/>
    <property type="evidence" value="ECO:0007669"/>
    <property type="project" value="Ensembl"/>
</dbReference>
<dbReference type="InterPro" id="IPR008833">
    <property type="entry name" value="Surf2"/>
</dbReference>
<dbReference type="PANTHER" id="PTHR34348">
    <property type="entry name" value="SURFEIT LOCUS PROTEIN 2"/>
    <property type="match status" value="1"/>
</dbReference>
<dbReference type="PANTHER" id="PTHR34348:SF1">
    <property type="entry name" value="SURFEIT LOCUS PROTEIN 2"/>
    <property type="match status" value="1"/>
</dbReference>
<dbReference type="Pfam" id="PF05477">
    <property type="entry name" value="SURF2"/>
    <property type="match status" value="1"/>
</dbReference>